<gene>
    <name evidence="1" type="primary">leuD</name>
    <name type="ordered locus">Bamb_3342</name>
</gene>
<protein>
    <recommendedName>
        <fullName evidence="1">3-isopropylmalate dehydratase small subunit</fullName>
        <ecNumber evidence="1">4.2.1.33</ecNumber>
    </recommendedName>
    <alternativeName>
        <fullName evidence="1">Alpha-IPM isomerase</fullName>
        <shortName evidence="1">IPMI</shortName>
    </alternativeName>
    <alternativeName>
        <fullName evidence="1">Isopropylmalate isomerase</fullName>
    </alternativeName>
</protein>
<evidence type="ECO:0000255" key="1">
    <source>
        <dbReference type="HAMAP-Rule" id="MF_01031"/>
    </source>
</evidence>
<comment type="function">
    <text evidence="1">Catalyzes the isomerization between 2-isopropylmalate and 3-isopropylmalate, via the formation of 2-isopropylmaleate.</text>
</comment>
<comment type="catalytic activity">
    <reaction evidence="1">
        <text>(2R,3S)-3-isopropylmalate = (2S)-2-isopropylmalate</text>
        <dbReference type="Rhea" id="RHEA:32287"/>
        <dbReference type="ChEBI" id="CHEBI:1178"/>
        <dbReference type="ChEBI" id="CHEBI:35121"/>
        <dbReference type="EC" id="4.2.1.33"/>
    </reaction>
</comment>
<comment type="pathway">
    <text evidence="1">Amino-acid biosynthesis; L-leucine biosynthesis; L-leucine from 3-methyl-2-oxobutanoate: step 2/4.</text>
</comment>
<comment type="subunit">
    <text evidence="1">Heterodimer of LeuC and LeuD.</text>
</comment>
<comment type="similarity">
    <text evidence="1">Belongs to the LeuD family. LeuD type 1 subfamily.</text>
</comment>
<sequence length="216" mass="24644">MEKFTVHTGVVAPLDRENVDTDAIIPKQFLKSIKRTGFGPNAFDEWRYLDHGEPGQDNSKRPLNPDFVLNQPRYQGASVLLARKNFGCGSSREHAPWALQQYGFRAIIAPSFADIFFNNCYKNGLLPIVLTEQQVDHLFNDTYAFNGYQLTVDLDAQVVRTGDGREYPFEIAAFRKYCLLNGFDDIGLTLRHADKIRQFEAERLAKQPWLNNKLVG</sequence>
<reference key="1">
    <citation type="submission" date="2006-08" db="EMBL/GenBank/DDBJ databases">
        <title>Complete sequence of chromosome 2 of Burkholderia cepacia AMMD.</title>
        <authorList>
            <person name="Copeland A."/>
            <person name="Lucas S."/>
            <person name="Lapidus A."/>
            <person name="Barry K."/>
            <person name="Detter J.C."/>
            <person name="Glavina del Rio T."/>
            <person name="Hammon N."/>
            <person name="Israni S."/>
            <person name="Pitluck S."/>
            <person name="Bruce D."/>
            <person name="Chain P."/>
            <person name="Malfatti S."/>
            <person name="Shin M."/>
            <person name="Vergez L."/>
            <person name="Schmutz J."/>
            <person name="Larimer F."/>
            <person name="Land M."/>
            <person name="Hauser L."/>
            <person name="Kyrpides N."/>
            <person name="Kim E."/>
            <person name="Parke J."/>
            <person name="Coenye T."/>
            <person name="Konstantinidis K."/>
            <person name="Ramette A."/>
            <person name="Tiedje J."/>
            <person name="Richardson P."/>
        </authorList>
    </citation>
    <scope>NUCLEOTIDE SEQUENCE [LARGE SCALE GENOMIC DNA]</scope>
    <source>
        <strain>ATCC BAA-244 / DSM 16087 / CCUG 44356 / LMG 19182 / AMMD</strain>
    </source>
</reference>
<name>LEUD_BURCM</name>
<feature type="chain" id="PRO_1000063740" description="3-isopropylmalate dehydratase small subunit">
    <location>
        <begin position="1"/>
        <end position="216"/>
    </location>
</feature>
<proteinExistence type="inferred from homology"/>
<organism>
    <name type="scientific">Burkholderia ambifaria (strain ATCC BAA-244 / DSM 16087 / CCUG 44356 / LMG 19182 / AMMD)</name>
    <name type="common">Burkholderia cepacia (strain AMMD)</name>
    <dbReference type="NCBI Taxonomy" id="339670"/>
    <lineage>
        <taxon>Bacteria</taxon>
        <taxon>Pseudomonadati</taxon>
        <taxon>Pseudomonadota</taxon>
        <taxon>Betaproteobacteria</taxon>
        <taxon>Burkholderiales</taxon>
        <taxon>Burkholderiaceae</taxon>
        <taxon>Burkholderia</taxon>
        <taxon>Burkholderia cepacia complex</taxon>
    </lineage>
</organism>
<dbReference type="EC" id="4.2.1.33" evidence="1"/>
<dbReference type="EMBL" id="CP000441">
    <property type="protein sequence ID" value="ABI88897.1"/>
    <property type="molecule type" value="Genomic_DNA"/>
</dbReference>
<dbReference type="RefSeq" id="WP_006754088.1">
    <property type="nucleotide sequence ID" value="NZ_CP009799.1"/>
</dbReference>
<dbReference type="SMR" id="Q0BAC6"/>
<dbReference type="GeneID" id="93086350"/>
<dbReference type="KEGG" id="bam:Bamb_3342"/>
<dbReference type="PATRIC" id="fig|339670.21.peg.3550"/>
<dbReference type="eggNOG" id="COG0066">
    <property type="taxonomic scope" value="Bacteria"/>
</dbReference>
<dbReference type="UniPathway" id="UPA00048">
    <property type="reaction ID" value="UER00071"/>
</dbReference>
<dbReference type="Proteomes" id="UP000000662">
    <property type="component" value="Chromosome 2"/>
</dbReference>
<dbReference type="GO" id="GO:0009316">
    <property type="term" value="C:3-isopropylmalate dehydratase complex"/>
    <property type="evidence" value="ECO:0007669"/>
    <property type="project" value="InterPro"/>
</dbReference>
<dbReference type="GO" id="GO:0003861">
    <property type="term" value="F:3-isopropylmalate dehydratase activity"/>
    <property type="evidence" value="ECO:0007669"/>
    <property type="project" value="UniProtKB-UniRule"/>
</dbReference>
<dbReference type="GO" id="GO:0009098">
    <property type="term" value="P:L-leucine biosynthetic process"/>
    <property type="evidence" value="ECO:0007669"/>
    <property type="project" value="UniProtKB-UniRule"/>
</dbReference>
<dbReference type="CDD" id="cd01577">
    <property type="entry name" value="IPMI_Swivel"/>
    <property type="match status" value="1"/>
</dbReference>
<dbReference type="FunFam" id="3.20.19.10:FF:000003">
    <property type="entry name" value="3-isopropylmalate dehydratase small subunit"/>
    <property type="match status" value="1"/>
</dbReference>
<dbReference type="Gene3D" id="3.20.19.10">
    <property type="entry name" value="Aconitase, domain 4"/>
    <property type="match status" value="1"/>
</dbReference>
<dbReference type="HAMAP" id="MF_01031">
    <property type="entry name" value="LeuD_type1"/>
    <property type="match status" value="1"/>
</dbReference>
<dbReference type="InterPro" id="IPR004431">
    <property type="entry name" value="3-IsopropMal_deHydase_ssu"/>
</dbReference>
<dbReference type="InterPro" id="IPR015928">
    <property type="entry name" value="Aconitase/3IPM_dehydase_swvl"/>
</dbReference>
<dbReference type="InterPro" id="IPR000573">
    <property type="entry name" value="AconitaseA/IPMdHydase_ssu_swvl"/>
</dbReference>
<dbReference type="InterPro" id="IPR033940">
    <property type="entry name" value="IPMI_Swivel"/>
</dbReference>
<dbReference type="InterPro" id="IPR050075">
    <property type="entry name" value="LeuD"/>
</dbReference>
<dbReference type="NCBIfam" id="TIGR00171">
    <property type="entry name" value="leuD"/>
    <property type="match status" value="1"/>
</dbReference>
<dbReference type="NCBIfam" id="NF002458">
    <property type="entry name" value="PRK01641.1"/>
    <property type="match status" value="1"/>
</dbReference>
<dbReference type="PANTHER" id="PTHR43345:SF5">
    <property type="entry name" value="3-ISOPROPYLMALATE DEHYDRATASE SMALL SUBUNIT"/>
    <property type="match status" value="1"/>
</dbReference>
<dbReference type="PANTHER" id="PTHR43345">
    <property type="entry name" value="3-ISOPROPYLMALATE DEHYDRATASE SMALL SUBUNIT 2-RELATED-RELATED"/>
    <property type="match status" value="1"/>
</dbReference>
<dbReference type="Pfam" id="PF00694">
    <property type="entry name" value="Aconitase_C"/>
    <property type="match status" value="1"/>
</dbReference>
<dbReference type="SUPFAM" id="SSF52016">
    <property type="entry name" value="LeuD/IlvD-like"/>
    <property type="match status" value="1"/>
</dbReference>
<keyword id="KW-0028">Amino-acid biosynthesis</keyword>
<keyword id="KW-0100">Branched-chain amino acid biosynthesis</keyword>
<keyword id="KW-0432">Leucine biosynthesis</keyword>
<keyword id="KW-0456">Lyase</keyword>
<accession>Q0BAC6</accession>